<organism>
    <name type="scientific">His1 virus (isolate Australia/Victoria)</name>
    <name type="common">His1V</name>
    <name type="synonym">Haloarcula hispanica virus 1</name>
    <dbReference type="NCBI Taxonomy" id="654912"/>
    <lineage>
        <taxon>Viruses</taxon>
        <taxon>Viruses incertae sedis</taxon>
        <taxon>Halspiviridae</taxon>
        <taxon>Salterprovirus</taxon>
        <taxon>Salterprovirus His1</taxon>
    </lineage>
</organism>
<keyword id="KW-1185">Reference proteome</keyword>
<name>Y009_HIS1I</name>
<gene>
    <name type="ORF">ORF9</name>
</gene>
<proteinExistence type="predicted"/>
<feature type="chain" id="PRO_0000384878" description="Uncharacterized protein ORF9">
    <location>
        <begin position="1"/>
        <end position="57"/>
    </location>
</feature>
<reference key="1">
    <citation type="journal article" date="2006" name="Virology">
        <title>His1 and His2 are distantly related, spindle-shaped haloviruses belonging to the novel virus group, Salterprovirus.</title>
        <authorList>
            <person name="Bath C."/>
            <person name="Cukalac T."/>
            <person name="Porter K."/>
            <person name="Dyall-Smith M.L."/>
        </authorList>
    </citation>
    <scope>NUCLEOTIDE SEQUENCE [GENOMIC DNA]</scope>
</reference>
<protein>
    <recommendedName>
        <fullName>Uncharacterized protein ORF9</fullName>
    </recommendedName>
</protein>
<organismHost>
    <name type="scientific">Haloarcula hispanica</name>
    <dbReference type="NCBI Taxonomy" id="51589"/>
</organismHost>
<accession>Q25BI6</accession>
<dbReference type="EMBL" id="AF191796">
    <property type="protein sequence ID" value="AAQ13722.1"/>
    <property type="molecule type" value="Genomic_DNA"/>
</dbReference>
<dbReference type="RefSeq" id="YP_529521.1">
    <property type="nucleotide sequence ID" value="NC_007914.1"/>
</dbReference>
<dbReference type="SMR" id="Q25BI6"/>
<dbReference type="KEGG" id="vg:5142386"/>
<dbReference type="Proteomes" id="UP000007024">
    <property type="component" value="Segment"/>
</dbReference>
<sequence length="57" mass="6592">MSQMSIFRKADVLSQTMTATIDVGRIENKETYEYYLKSHGFEVTKETDTIWAVKATQ</sequence>